<comment type="function">
    <text evidence="1">Catalyzes the GTP-dependent ribosomal translocation step during translation elongation. During this step, the ribosome changes from the pre-translocational (PRE) to the post-translocational (POST) state as the newly formed A-site-bound peptidyl-tRNA and P-site-bound deacylated tRNA move to the P and E sites, respectively. Catalyzes the coordinated movement of the two tRNA molecules, the mRNA and conformational changes in the ribosome.</text>
</comment>
<comment type="subcellular location">
    <subcellularLocation>
        <location evidence="1">Cytoplasm</location>
    </subcellularLocation>
</comment>
<comment type="similarity">
    <text evidence="1">Belongs to the TRAFAC class translation factor GTPase superfamily. Classic translation factor GTPase family. EF-G/EF-2 subfamily.</text>
</comment>
<sequence length="704" mass="77730">MPRNTALEKYRNIGICAHVDAGKTTTTERILFYTGLSHKIGEVHDGAATMDWMEQEQERGITITSAATTTFWSGMDQQFEKHRINIIDTPGHVDFTIEVERSLRVLDGAVVVFCGSSGVEPQSETVWRQANKYGVPRIVFVNKMDRSGADFERVCAQIKTRLKANVVPVQLNIGAEEDFKGVIDLIRMKAIMWNEEDMGLTYELVDIPADLQDRAEELRMEMIEAAAEASEELMEKYLEGGELSEDEIHQGLRARVLNNEIVLAFCGSAFKNKGVQAVLDGVVRYLPAPNQVPAIKCETEDGEPASRPSSDDAPFAALAFKLATDPFVGNLTFIRVYSGVLKSGDAVYNPVKGKKERVGRIVQMHANKRDEIKEVRAGDIAACIGLKDVTTGDTLCDQEDVVILEKMDFPEPVISVAVEPKSKADQEKMSIALGKLAAEDPSFRVKTDEESGQTIISGMGELHLDIIVDRMRREFKVEANVGNPQVAYRETIRSKVEQEAKFVRQSGGRGQYGHVFVRFEPLDEVDENGEAKVFKFVDEVVGGVVPKEYIGSVAKGIEEQLNNGVLAGYPMIGVKATLYDGSYHDVDSSEMAFKIAGSMALKEGAKKANACILEPIMKVEVVTPEDYLGDVMGDLNRRRGIIEGMDENPSGRVINALVPLAEMFGYATNVRSISQGRASFSMEFKKYAEVPNNIADEIIKSRNS</sequence>
<organism>
    <name type="scientific">Francisella tularensis subsp. holarctica (strain LVS)</name>
    <dbReference type="NCBI Taxonomy" id="376619"/>
    <lineage>
        <taxon>Bacteria</taxon>
        <taxon>Pseudomonadati</taxon>
        <taxon>Pseudomonadota</taxon>
        <taxon>Gammaproteobacteria</taxon>
        <taxon>Thiotrichales</taxon>
        <taxon>Francisellaceae</taxon>
        <taxon>Francisella</taxon>
    </lineage>
</organism>
<proteinExistence type="inferred from homology"/>
<reference key="1">
    <citation type="submission" date="2006-03" db="EMBL/GenBank/DDBJ databases">
        <title>Complete genome sequence of Francisella tularensis LVS (Live Vaccine Strain).</title>
        <authorList>
            <person name="Chain P."/>
            <person name="Larimer F."/>
            <person name="Land M."/>
            <person name="Stilwagen S."/>
            <person name="Larsson P."/>
            <person name="Bearden S."/>
            <person name="Chu M."/>
            <person name="Oyston P."/>
            <person name="Forsman M."/>
            <person name="Andersson S."/>
            <person name="Lindler L."/>
            <person name="Titball R."/>
            <person name="Garcia E."/>
        </authorList>
    </citation>
    <scope>NUCLEOTIDE SEQUENCE [LARGE SCALE GENOMIC DNA]</scope>
    <source>
        <strain>LVS</strain>
    </source>
</reference>
<dbReference type="EMBL" id="AM233362">
    <property type="protein sequence ID" value="CAJ78675.1"/>
    <property type="molecule type" value="Genomic_DNA"/>
</dbReference>
<dbReference type="RefSeq" id="WP_003043247.1">
    <property type="nucleotide sequence ID" value="NZ_CP009694.1"/>
</dbReference>
<dbReference type="SMR" id="Q2A5H2"/>
<dbReference type="GeneID" id="75264263"/>
<dbReference type="KEGG" id="ftl:FTL_0234"/>
<dbReference type="Proteomes" id="UP000001944">
    <property type="component" value="Chromosome"/>
</dbReference>
<dbReference type="GO" id="GO:0005737">
    <property type="term" value="C:cytoplasm"/>
    <property type="evidence" value="ECO:0007669"/>
    <property type="project" value="UniProtKB-SubCell"/>
</dbReference>
<dbReference type="GO" id="GO:0005525">
    <property type="term" value="F:GTP binding"/>
    <property type="evidence" value="ECO:0007669"/>
    <property type="project" value="UniProtKB-UniRule"/>
</dbReference>
<dbReference type="GO" id="GO:0003924">
    <property type="term" value="F:GTPase activity"/>
    <property type="evidence" value="ECO:0007669"/>
    <property type="project" value="InterPro"/>
</dbReference>
<dbReference type="GO" id="GO:0097216">
    <property type="term" value="F:guanosine tetraphosphate binding"/>
    <property type="evidence" value="ECO:0007669"/>
    <property type="project" value="UniProtKB-ARBA"/>
</dbReference>
<dbReference type="GO" id="GO:0003746">
    <property type="term" value="F:translation elongation factor activity"/>
    <property type="evidence" value="ECO:0007669"/>
    <property type="project" value="UniProtKB-UniRule"/>
</dbReference>
<dbReference type="GO" id="GO:0032790">
    <property type="term" value="P:ribosome disassembly"/>
    <property type="evidence" value="ECO:0007669"/>
    <property type="project" value="TreeGrafter"/>
</dbReference>
<dbReference type="CDD" id="cd01886">
    <property type="entry name" value="EF-G"/>
    <property type="match status" value="1"/>
</dbReference>
<dbReference type="CDD" id="cd16262">
    <property type="entry name" value="EFG_III"/>
    <property type="match status" value="1"/>
</dbReference>
<dbReference type="CDD" id="cd01434">
    <property type="entry name" value="EFG_mtEFG1_IV"/>
    <property type="match status" value="1"/>
</dbReference>
<dbReference type="CDD" id="cd03713">
    <property type="entry name" value="EFG_mtEFG_C"/>
    <property type="match status" value="1"/>
</dbReference>
<dbReference type="CDD" id="cd04088">
    <property type="entry name" value="EFG_mtEFG_II"/>
    <property type="match status" value="1"/>
</dbReference>
<dbReference type="FunFam" id="2.40.30.10:FF:000006">
    <property type="entry name" value="Elongation factor G"/>
    <property type="match status" value="1"/>
</dbReference>
<dbReference type="FunFam" id="3.30.230.10:FF:000003">
    <property type="entry name" value="Elongation factor G"/>
    <property type="match status" value="1"/>
</dbReference>
<dbReference type="FunFam" id="3.30.70.240:FF:000001">
    <property type="entry name" value="Elongation factor G"/>
    <property type="match status" value="1"/>
</dbReference>
<dbReference type="FunFam" id="3.30.70.870:FF:000001">
    <property type="entry name" value="Elongation factor G"/>
    <property type="match status" value="1"/>
</dbReference>
<dbReference type="FunFam" id="3.40.50.300:FF:000029">
    <property type="entry name" value="Elongation factor G"/>
    <property type="match status" value="1"/>
</dbReference>
<dbReference type="Gene3D" id="3.30.230.10">
    <property type="match status" value="1"/>
</dbReference>
<dbReference type="Gene3D" id="3.30.70.240">
    <property type="match status" value="1"/>
</dbReference>
<dbReference type="Gene3D" id="3.30.70.870">
    <property type="entry name" value="Elongation Factor G (Translational Gtpase), domain 3"/>
    <property type="match status" value="1"/>
</dbReference>
<dbReference type="Gene3D" id="3.40.50.300">
    <property type="entry name" value="P-loop containing nucleotide triphosphate hydrolases"/>
    <property type="match status" value="1"/>
</dbReference>
<dbReference type="Gene3D" id="2.40.30.10">
    <property type="entry name" value="Translation factors"/>
    <property type="match status" value="1"/>
</dbReference>
<dbReference type="HAMAP" id="MF_00054_B">
    <property type="entry name" value="EF_G_EF_2_B"/>
    <property type="match status" value="1"/>
</dbReference>
<dbReference type="InterPro" id="IPR041095">
    <property type="entry name" value="EFG_II"/>
</dbReference>
<dbReference type="InterPro" id="IPR009022">
    <property type="entry name" value="EFG_III"/>
</dbReference>
<dbReference type="InterPro" id="IPR035647">
    <property type="entry name" value="EFG_III/V"/>
</dbReference>
<dbReference type="InterPro" id="IPR047872">
    <property type="entry name" value="EFG_IV"/>
</dbReference>
<dbReference type="InterPro" id="IPR035649">
    <property type="entry name" value="EFG_V"/>
</dbReference>
<dbReference type="InterPro" id="IPR000640">
    <property type="entry name" value="EFG_V-like"/>
</dbReference>
<dbReference type="InterPro" id="IPR004161">
    <property type="entry name" value="EFTu-like_2"/>
</dbReference>
<dbReference type="InterPro" id="IPR031157">
    <property type="entry name" value="G_TR_CS"/>
</dbReference>
<dbReference type="InterPro" id="IPR027417">
    <property type="entry name" value="P-loop_NTPase"/>
</dbReference>
<dbReference type="InterPro" id="IPR020568">
    <property type="entry name" value="Ribosomal_Su5_D2-typ_SF"/>
</dbReference>
<dbReference type="InterPro" id="IPR014721">
    <property type="entry name" value="Ribsml_uS5_D2-typ_fold_subgr"/>
</dbReference>
<dbReference type="InterPro" id="IPR005225">
    <property type="entry name" value="Small_GTP-bd"/>
</dbReference>
<dbReference type="InterPro" id="IPR000795">
    <property type="entry name" value="T_Tr_GTP-bd_dom"/>
</dbReference>
<dbReference type="InterPro" id="IPR009000">
    <property type="entry name" value="Transl_B-barrel_sf"/>
</dbReference>
<dbReference type="InterPro" id="IPR004540">
    <property type="entry name" value="Transl_elong_EFG/EF2"/>
</dbReference>
<dbReference type="InterPro" id="IPR005517">
    <property type="entry name" value="Transl_elong_EFG/EF2_IV"/>
</dbReference>
<dbReference type="NCBIfam" id="TIGR00484">
    <property type="entry name" value="EF-G"/>
    <property type="match status" value="1"/>
</dbReference>
<dbReference type="NCBIfam" id="NF009381">
    <property type="entry name" value="PRK12740.1-5"/>
    <property type="match status" value="1"/>
</dbReference>
<dbReference type="NCBIfam" id="TIGR00231">
    <property type="entry name" value="small_GTP"/>
    <property type="match status" value="1"/>
</dbReference>
<dbReference type="PANTHER" id="PTHR43261:SF1">
    <property type="entry name" value="RIBOSOME-RELEASING FACTOR 2, MITOCHONDRIAL"/>
    <property type="match status" value="1"/>
</dbReference>
<dbReference type="PANTHER" id="PTHR43261">
    <property type="entry name" value="TRANSLATION ELONGATION FACTOR G-RELATED"/>
    <property type="match status" value="1"/>
</dbReference>
<dbReference type="Pfam" id="PF00679">
    <property type="entry name" value="EFG_C"/>
    <property type="match status" value="1"/>
</dbReference>
<dbReference type="Pfam" id="PF14492">
    <property type="entry name" value="EFG_III"/>
    <property type="match status" value="1"/>
</dbReference>
<dbReference type="Pfam" id="PF03764">
    <property type="entry name" value="EFG_IV"/>
    <property type="match status" value="1"/>
</dbReference>
<dbReference type="Pfam" id="PF00009">
    <property type="entry name" value="GTP_EFTU"/>
    <property type="match status" value="1"/>
</dbReference>
<dbReference type="Pfam" id="PF03144">
    <property type="entry name" value="GTP_EFTU_D2"/>
    <property type="match status" value="1"/>
</dbReference>
<dbReference type="PRINTS" id="PR00315">
    <property type="entry name" value="ELONGATNFCT"/>
</dbReference>
<dbReference type="SMART" id="SM00838">
    <property type="entry name" value="EFG_C"/>
    <property type="match status" value="1"/>
</dbReference>
<dbReference type="SMART" id="SM00889">
    <property type="entry name" value="EFG_IV"/>
    <property type="match status" value="1"/>
</dbReference>
<dbReference type="SUPFAM" id="SSF54980">
    <property type="entry name" value="EF-G C-terminal domain-like"/>
    <property type="match status" value="2"/>
</dbReference>
<dbReference type="SUPFAM" id="SSF52540">
    <property type="entry name" value="P-loop containing nucleoside triphosphate hydrolases"/>
    <property type="match status" value="1"/>
</dbReference>
<dbReference type="SUPFAM" id="SSF54211">
    <property type="entry name" value="Ribosomal protein S5 domain 2-like"/>
    <property type="match status" value="1"/>
</dbReference>
<dbReference type="SUPFAM" id="SSF50447">
    <property type="entry name" value="Translation proteins"/>
    <property type="match status" value="1"/>
</dbReference>
<dbReference type="PROSITE" id="PS00301">
    <property type="entry name" value="G_TR_1"/>
    <property type="match status" value="1"/>
</dbReference>
<dbReference type="PROSITE" id="PS51722">
    <property type="entry name" value="G_TR_2"/>
    <property type="match status" value="1"/>
</dbReference>
<accession>Q2A5H2</accession>
<gene>
    <name evidence="1" type="primary">fusA</name>
    <name type="ordered locus">FTL_0234</name>
</gene>
<protein>
    <recommendedName>
        <fullName evidence="1">Elongation factor G</fullName>
        <shortName evidence="1">EF-G</shortName>
    </recommendedName>
</protein>
<evidence type="ECO:0000255" key="1">
    <source>
        <dbReference type="HAMAP-Rule" id="MF_00054"/>
    </source>
</evidence>
<feature type="chain" id="PRO_0000263450" description="Elongation factor G">
    <location>
        <begin position="1"/>
        <end position="704"/>
    </location>
</feature>
<feature type="domain" description="tr-type G">
    <location>
        <begin position="8"/>
        <end position="290"/>
    </location>
</feature>
<feature type="binding site" evidence="1">
    <location>
        <begin position="17"/>
        <end position="24"/>
    </location>
    <ligand>
        <name>GTP</name>
        <dbReference type="ChEBI" id="CHEBI:37565"/>
    </ligand>
</feature>
<feature type="binding site" evidence="1">
    <location>
        <begin position="88"/>
        <end position="92"/>
    </location>
    <ligand>
        <name>GTP</name>
        <dbReference type="ChEBI" id="CHEBI:37565"/>
    </ligand>
</feature>
<feature type="binding site" evidence="1">
    <location>
        <begin position="142"/>
        <end position="145"/>
    </location>
    <ligand>
        <name>GTP</name>
        <dbReference type="ChEBI" id="CHEBI:37565"/>
    </ligand>
</feature>
<keyword id="KW-0963">Cytoplasm</keyword>
<keyword id="KW-0251">Elongation factor</keyword>
<keyword id="KW-0342">GTP-binding</keyword>
<keyword id="KW-0547">Nucleotide-binding</keyword>
<keyword id="KW-0648">Protein biosynthesis</keyword>
<keyword id="KW-1185">Reference proteome</keyword>
<name>EFG_FRATH</name>